<sequence>MSEKKINLLDLDRKAMRALFADMGEKPFRADQLMKWLYHFGVSDFEEMTNINKVLRQKLAARCEIVAPEISSFQKSTDGTIKFAINVGQGQEVETVYIPEDDRATLCVSSQVGCALECTFCSTGQQGFNRNLTVSEIVGQIWRVSHFLGFAKDTGERPITNVVMMGMGEPLLNLANVIPAMDIMLDDFGFSLSKRRVTLSTSGVVPALDKLGDAIDVALAVSIHAPNDELRDILVPINKKYPLDEFLAGIRRYIAKSNANRGRVTVEYVMLDHINDSTDQAHELAKLMKDTPCKVNLIPFNPYPGSPYGRSSNSRIDRFSKVLMEYGFTVIVRKTRGDDIDAACGQLAGDIRDRTKRLAKKRMQENQISVTMN</sequence>
<name>RLMN_SHEB2</name>
<feature type="chain" id="PRO_1000188606" description="Dual-specificity RNA methyltransferase RlmN">
    <location>
        <begin position="1"/>
        <end position="373"/>
    </location>
</feature>
<feature type="domain" description="Radical SAM core" evidence="2">
    <location>
        <begin position="100"/>
        <end position="339"/>
    </location>
</feature>
<feature type="active site" description="Proton acceptor" evidence="1">
    <location>
        <position position="94"/>
    </location>
</feature>
<feature type="active site" description="S-methylcysteine intermediate" evidence="1">
    <location>
        <position position="344"/>
    </location>
</feature>
<feature type="binding site" evidence="1">
    <location>
        <position position="114"/>
    </location>
    <ligand>
        <name>[4Fe-4S] cluster</name>
        <dbReference type="ChEBI" id="CHEBI:49883"/>
        <note>4Fe-4S-S-AdoMet</note>
    </ligand>
</feature>
<feature type="binding site" evidence="1">
    <location>
        <position position="118"/>
    </location>
    <ligand>
        <name>[4Fe-4S] cluster</name>
        <dbReference type="ChEBI" id="CHEBI:49883"/>
        <note>4Fe-4S-S-AdoMet</note>
    </ligand>
</feature>
<feature type="binding site" evidence="1">
    <location>
        <position position="121"/>
    </location>
    <ligand>
        <name>[4Fe-4S] cluster</name>
        <dbReference type="ChEBI" id="CHEBI:49883"/>
        <note>4Fe-4S-S-AdoMet</note>
    </ligand>
</feature>
<feature type="binding site" evidence="1">
    <location>
        <begin position="168"/>
        <end position="169"/>
    </location>
    <ligand>
        <name>S-adenosyl-L-methionine</name>
        <dbReference type="ChEBI" id="CHEBI:59789"/>
    </ligand>
</feature>
<feature type="binding site" evidence="1">
    <location>
        <position position="200"/>
    </location>
    <ligand>
        <name>S-adenosyl-L-methionine</name>
        <dbReference type="ChEBI" id="CHEBI:59789"/>
    </ligand>
</feature>
<feature type="binding site" evidence="1">
    <location>
        <begin position="222"/>
        <end position="224"/>
    </location>
    <ligand>
        <name>S-adenosyl-L-methionine</name>
        <dbReference type="ChEBI" id="CHEBI:59789"/>
    </ligand>
</feature>
<feature type="binding site" evidence="1">
    <location>
        <position position="301"/>
    </location>
    <ligand>
        <name>S-adenosyl-L-methionine</name>
        <dbReference type="ChEBI" id="CHEBI:59789"/>
    </ligand>
</feature>
<feature type="disulfide bond" description="(transient)" evidence="1">
    <location>
        <begin position="107"/>
        <end position="344"/>
    </location>
</feature>
<organism>
    <name type="scientific">Shewanella baltica (strain OS223)</name>
    <dbReference type="NCBI Taxonomy" id="407976"/>
    <lineage>
        <taxon>Bacteria</taxon>
        <taxon>Pseudomonadati</taxon>
        <taxon>Pseudomonadota</taxon>
        <taxon>Gammaproteobacteria</taxon>
        <taxon>Alteromonadales</taxon>
        <taxon>Shewanellaceae</taxon>
        <taxon>Shewanella</taxon>
    </lineage>
</organism>
<reference key="1">
    <citation type="submission" date="2008-12" db="EMBL/GenBank/DDBJ databases">
        <title>Complete sequence of chromosome of Shewanella baltica OS223.</title>
        <authorList>
            <consortium name="US DOE Joint Genome Institute"/>
            <person name="Lucas S."/>
            <person name="Copeland A."/>
            <person name="Lapidus A."/>
            <person name="Glavina del Rio T."/>
            <person name="Dalin E."/>
            <person name="Tice H."/>
            <person name="Bruce D."/>
            <person name="Goodwin L."/>
            <person name="Pitluck S."/>
            <person name="Chertkov O."/>
            <person name="Meincke L."/>
            <person name="Brettin T."/>
            <person name="Detter J.C."/>
            <person name="Han C."/>
            <person name="Kuske C.R."/>
            <person name="Larimer F."/>
            <person name="Land M."/>
            <person name="Hauser L."/>
            <person name="Kyrpides N."/>
            <person name="Ovchinnikova G."/>
            <person name="Brettar I."/>
            <person name="Rodrigues J."/>
            <person name="Konstantinidis K."/>
            <person name="Tiedje J."/>
        </authorList>
    </citation>
    <scope>NUCLEOTIDE SEQUENCE [LARGE SCALE GENOMIC DNA]</scope>
    <source>
        <strain>OS223</strain>
    </source>
</reference>
<evidence type="ECO:0000255" key="1">
    <source>
        <dbReference type="HAMAP-Rule" id="MF_01849"/>
    </source>
</evidence>
<evidence type="ECO:0000255" key="2">
    <source>
        <dbReference type="PROSITE-ProRule" id="PRU01266"/>
    </source>
</evidence>
<accession>B8E9S4</accession>
<protein>
    <recommendedName>
        <fullName evidence="1">Dual-specificity RNA methyltransferase RlmN</fullName>
        <ecNumber evidence="1">2.1.1.192</ecNumber>
    </recommendedName>
    <alternativeName>
        <fullName evidence="1">23S rRNA (adenine(2503)-C(2))-methyltransferase</fullName>
    </alternativeName>
    <alternativeName>
        <fullName evidence="1">23S rRNA m2A2503 methyltransferase</fullName>
    </alternativeName>
    <alternativeName>
        <fullName evidence="1">Ribosomal RNA large subunit methyltransferase N</fullName>
    </alternativeName>
    <alternativeName>
        <fullName evidence="1">tRNA (adenine(37)-C(2))-methyltransferase</fullName>
    </alternativeName>
    <alternativeName>
        <fullName evidence="1">tRNA m2A37 methyltransferase</fullName>
    </alternativeName>
</protein>
<proteinExistence type="inferred from homology"/>
<comment type="function">
    <text evidence="1">Specifically methylates position 2 of adenine 2503 in 23S rRNA and position 2 of adenine 37 in tRNAs. m2A2503 modification seems to play a crucial role in the proofreading step occurring at the peptidyl transferase center and thus would serve to optimize ribosomal fidelity.</text>
</comment>
<comment type="catalytic activity">
    <reaction evidence="1">
        <text>adenosine(2503) in 23S rRNA + 2 reduced [2Fe-2S]-[ferredoxin] + 2 S-adenosyl-L-methionine = 2-methyladenosine(2503) in 23S rRNA + 5'-deoxyadenosine + L-methionine + 2 oxidized [2Fe-2S]-[ferredoxin] + S-adenosyl-L-homocysteine</text>
        <dbReference type="Rhea" id="RHEA:42916"/>
        <dbReference type="Rhea" id="RHEA-COMP:10000"/>
        <dbReference type="Rhea" id="RHEA-COMP:10001"/>
        <dbReference type="Rhea" id="RHEA-COMP:10152"/>
        <dbReference type="Rhea" id="RHEA-COMP:10282"/>
        <dbReference type="ChEBI" id="CHEBI:17319"/>
        <dbReference type="ChEBI" id="CHEBI:33737"/>
        <dbReference type="ChEBI" id="CHEBI:33738"/>
        <dbReference type="ChEBI" id="CHEBI:57844"/>
        <dbReference type="ChEBI" id="CHEBI:57856"/>
        <dbReference type="ChEBI" id="CHEBI:59789"/>
        <dbReference type="ChEBI" id="CHEBI:74411"/>
        <dbReference type="ChEBI" id="CHEBI:74497"/>
        <dbReference type="EC" id="2.1.1.192"/>
    </reaction>
</comment>
<comment type="catalytic activity">
    <reaction evidence="1">
        <text>adenosine(37) in tRNA + 2 reduced [2Fe-2S]-[ferredoxin] + 2 S-adenosyl-L-methionine = 2-methyladenosine(37) in tRNA + 5'-deoxyadenosine + L-methionine + 2 oxidized [2Fe-2S]-[ferredoxin] + S-adenosyl-L-homocysteine</text>
        <dbReference type="Rhea" id="RHEA:43332"/>
        <dbReference type="Rhea" id="RHEA-COMP:10000"/>
        <dbReference type="Rhea" id="RHEA-COMP:10001"/>
        <dbReference type="Rhea" id="RHEA-COMP:10162"/>
        <dbReference type="Rhea" id="RHEA-COMP:10485"/>
        <dbReference type="ChEBI" id="CHEBI:17319"/>
        <dbReference type="ChEBI" id="CHEBI:33737"/>
        <dbReference type="ChEBI" id="CHEBI:33738"/>
        <dbReference type="ChEBI" id="CHEBI:57844"/>
        <dbReference type="ChEBI" id="CHEBI:57856"/>
        <dbReference type="ChEBI" id="CHEBI:59789"/>
        <dbReference type="ChEBI" id="CHEBI:74411"/>
        <dbReference type="ChEBI" id="CHEBI:74497"/>
        <dbReference type="EC" id="2.1.1.192"/>
    </reaction>
</comment>
<comment type="cofactor">
    <cofactor evidence="1">
        <name>[4Fe-4S] cluster</name>
        <dbReference type="ChEBI" id="CHEBI:49883"/>
    </cofactor>
    <text evidence="1">Binds 1 [4Fe-4S] cluster. The cluster is coordinated with 3 cysteines and an exchangeable S-adenosyl-L-methionine.</text>
</comment>
<comment type="subcellular location">
    <subcellularLocation>
        <location evidence="1">Cytoplasm</location>
    </subcellularLocation>
</comment>
<comment type="miscellaneous">
    <text evidence="1">Reaction proceeds by a ping-pong mechanism involving intermediate methylation of a conserved cysteine residue.</text>
</comment>
<comment type="similarity">
    <text evidence="1">Belongs to the radical SAM superfamily. RlmN family.</text>
</comment>
<keyword id="KW-0004">4Fe-4S</keyword>
<keyword id="KW-0963">Cytoplasm</keyword>
<keyword id="KW-1015">Disulfide bond</keyword>
<keyword id="KW-0408">Iron</keyword>
<keyword id="KW-0411">Iron-sulfur</keyword>
<keyword id="KW-0479">Metal-binding</keyword>
<keyword id="KW-0489">Methyltransferase</keyword>
<keyword id="KW-0698">rRNA processing</keyword>
<keyword id="KW-0949">S-adenosyl-L-methionine</keyword>
<keyword id="KW-0808">Transferase</keyword>
<keyword id="KW-0819">tRNA processing</keyword>
<gene>
    <name evidence="1" type="primary">rlmN</name>
    <name type="ordered locus">Sbal223_1370</name>
</gene>
<dbReference type="EC" id="2.1.1.192" evidence="1"/>
<dbReference type="EMBL" id="CP001252">
    <property type="protein sequence ID" value="ACK45878.1"/>
    <property type="molecule type" value="Genomic_DNA"/>
</dbReference>
<dbReference type="RefSeq" id="WP_006082485.1">
    <property type="nucleotide sequence ID" value="NC_011663.1"/>
</dbReference>
<dbReference type="SMR" id="B8E9S4"/>
<dbReference type="KEGG" id="sbp:Sbal223_1370"/>
<dbReference type="HOGENOM" id="CLU_029101_2_0_6"/>
<dbReference type="Proteomes" id="UP000002507">
    <property type="component" value="Chromosome"/>
</dbReference>
<dbReference type="GO" id="GO:0005737">
    <property type="term" value="C:cytoplasm"/>
    <property type="evidence" value="ECO:0007669"/>
    <property type="project" value="UniProtKB-SubCell"/>
</dbReference>
<dbReference type="GO" id="GO:0051539">
    <property type="term" value="F:4 iron, 4 sulfur cluster binding"/>
    <property type="evidence" value="ECO:0007669"/>
    <property type="project" value="UniProtKB-UniRule"/>
</dbReference>
<dbReference type="GO" id="GO:0046872">
    <property type="term" value="F:metal ion binding"/>
    <property type="evidence" value="ECO:0007669"/>
    <property type="project" value="UniProtKB-KW"/>
</dbReference>
<dbReference type="GO" id="GO:0070040">
    <property type="term" value="F:rRNA (adenine(2503)-C2-)-methyltransferase activity"/>
    <property type="evidence" value="ECO:0007669"/>
    <property type="project" value="UniProtKB-UniRule"/>
</dbReference>
<dbReference type="GO" id="GO:0019843">
    <property type="term" value="F:rRNA binding"/>
    <property type="evidence" value="ECO:0007669"/>
    <property type="project" value="UniProtKB-UniRule"/>
</dbReference>
<dbReference type="GO" id="GO:0002935">
    <property type="term" value="F:tRNA (adenine(37)-C2)-methyltransferase activity"/>
    <property type="evidence" value="ECO:0007669"/>
    <property type="project" value="UniProtKB-UniRule"/>
</dbReference>
<dbReference type="GO" id="GO:0000049">
    <property type="term" value="F:tRNA binding"/>
    <property type="evidence" value="ECO:0007669"/>
    <property type="project" value="UniProtKB-UniRule"/>
</dbReference>
<dbReference type="GO" id="GO:0070475">
    <property type="term" value="P:rRNA base methylation"/>
    <property type="evidence" value="ECO:0007669"/>
    <property type="project" value="UniProtKB-UniRule"/>
</dbReference>
<dbReference type="GO" id="GO:0030488">
    <property type="term" value="P:tRNA methylation"/>
    <property type="evidence" value="ECO:0007669"/>
    <property type="project" value="UniProtKB-UniRule"/>
</dbReference>
<dbReference type="CDD" id="cd01335">
    <property type="entry name" value="Radical_SAM"/>
    <property type="match status" value="1"/>
</dbReference>
<dbReference type="FunFam" id="1.10.150.530:FF:000003">
    <property type="entry name" value="Dual-specificity RNA methyltransferase RlmN"/>
    <property type="match status" value="1"/>
</dbReference>
<dbReference type="FunFam" id="3.20.20.70:FF:000008">
    <property type="entry name" value="Dual-specificity RNA methyltransferase RlmN"/>
    <property type="match status" value="1"/>
</dbReference>
<dbReference type="Gene3D" id="1.10.150.530">
    <property type="match status" value="1"/>
</dbReference>
<dbReference type="Gene3D" id="3.20.20.70">
    <property type="entry name" value="Aldolase class I"/>
    <property type="match status" value="1"/>
</dbReference>
<dbReference type="HAMAP" id="MF_01849">
    <property type="entry name" value="RNA_methyltr_RlmN"/>
    <property type="match status" value="1"/>
</dbReference>
<dbReference type="InterPro" id="IPR013785">
    <property type="entry name" value="Aldolase_TIM"/>
</dbReference>
<dbReference type="InterPro" id="IPR040072">
    <property type="entry name" value="Methyltransferase_A"/>
</dbReference>
<dbReference type="InterPro" id="IPR048641">
    <property type="entry name" value="RlmN_N"/>
</dbReference>
<dbReference type="InterPro" id="IPR027492">
    <property type="entry name" value="RNA_MTrfase_RlmN"/>
</dbReference>
<dbReference type="InterPro" id="IPR004383">
    <property type="entry name" value="rRNA_lsu_MTrfase_RlmN/Cfr"/>
</dbReference>
<dbReference type="InterPro" id="IPR007197">
    <property type="entry name" value="rSAM"/>
</dbReference>
<dbReference type="NCBIfam" id="NF008396">
    <property type="entry name" value="PRK11194.1"/>
    <property type="match status" value="1"/>
</dbReference>
<dbReference type="NCBIfam" id="TIGR00048">
    <property type="entry name" value="rRNA_mod_RlmN"/>
    <property type="match status" value="1"/>
</dbReference>
<dbReference type="PANTHER" id="PTHR30544">
    <property type="entry name" value="23S RRNA METHYLTRANSFERASE"/>
    <property type="match status" value="1"/>
</dbReference>
<dbReference type="PANTHER" id="PTHR30544:SF5">
    <property type="entry name" value="RADICAL SAM CORE DOMAIN-CONTAINING PROTEIN"/>
    <property type="match status" value="1"/>
</dbReference>
<dbReference type="Pfam" id="PF04055">
    <property type="entry name" value="Radical_SAM"/>
    <property type="match status" value="1"/>
</dbReference>
<dbReference type="Pfam" id="PF21016">
    <property type="entry name" value="RlmN_N"/>
    <property type="match status" value="1"/>
</dbReference>
<dbReference type="PIRSF" id="PIRSF006004">
    <property type="entry name" value="CHP00048"/>
    <property type="match status" value="1"/>
</dbReference>
<dbReference type="SFLD" id="SFLDF00275">
    <property type="entry name" value="adenosine_C2_methyltransferase"/>
    <property type="match status" value="1"/>
</dbReference>
<dbReference type="SFLD" id="SFLDG01062">
    <property type="entry name" value="methyltransferase_(Class_A)"/>
    <property type="match status" value="1"/>
</dbReference>
<dbReference type="SUPFAM" id="SSF102114">
    <property type="entry name" value="Radical SAM enzymes"/>
    <property type="match status" value="1"/>
</dbReference>
<dbReference type="PROSITE" id="PS51918">
    <property type="entry name" value="RADICAL_SAM"/>
    <property type="match status" value="1"/>
</dbReference>